<evidence type="ECO:0000255" key="1">
    <source>
        <dbReference type="HAMAP-Rule" id="MF_01317"/>
    </source>
</evidence>
<comment type="function">
    <text evidence="1">One of the components of the core complex of photosystem II (PSII). PSII is a light-driven water:plastoquinone oxidoreductase that uses light energy to abstract electrons from H(2)O, generating O(2) and a proton gradient subsequently used for ATP formation. It consists of a core antenna complex that captures photons, and an electron transfer chain that converts photonic excitation into a charge separation. This subunit is found at the monomer-monomer interface and is required for correct PSII assembly and/or dimerization.</text>
</comment>
<comment type="subunit">
    <text evidence="1">PSII is composed of 1 copy each of membrane proteins PsbA, PsbB, PsbC, PsbD, PsbE, PsbF, PsbH, PsbI, PsbJ, PsbK, PsbL, PsbM, PsbT, PsbX, PsbY, PsbZ, Psb30/Ycf12, at least 3 peripheral proteins of the oxygen-evolving complex and a large number of cofactors. It forms dimeric complexes.</text>
</comment>
<comment type="subcellular location">
    <subcellularLocation>
        <location evidence="1">Plastid</location>
        <location evidence="1">Organellar chromatophore thylakoid membrane</location>
        <topology evidence="1">Single-pass membrane protein</topology>
    </subcellularLocation>
</comment>
<comment type="similarity">
    <text evidence="1">Belongs to the PsbL family.</text>
</comment>
<gene>
    <name evidence="1" type="primary">psbL</name>
    <name type="ordered locus">PCC_0489</name>
</gene>
<dbReference type="EMBL" id="CP000815">
    <property type="protein sequence ID" value="ACB42926.1"/>
    <property type="molecule type" value="Genomic_DNA"/>
</dbReference>
<dbReference type="RefSeq" id="YP_002049136.1">
    <property type="nucleotide sequence ID" value="NC_011087.1"/>
</dbReference>
<dbReference type="SMR" id="B1X4Q7"/>
<dbReference type="GeneID" id="6481256"/>
<dbReference type="GO" id="GO:0070118">
    <property type="term" value="C:organellar chromatophore thylakoid membrane"/>
    <property type="evidence" value="ECO:0007669"/>
    <property type="project" value="UniProtKB-SubCell"/>
</dbReference>
<dbReference type="GO" id="GO:0009539">
    <property type="term" value="C:photosystem II reaction center"/>
    <property type="evidence" value="ECO:0007669"/>
    <property type="project" value="InterPro"/>
</dbReference>
<dbReference type="GO" id="GO:0009536">
    <property type="term" value="C:plastid"/>
    <property type="evidence" value="ECO:0007669"/>
    <property type="project" value="UniProtKB-KW"/>
</dbReference>
<dbReference type="GO" id="GO:0015979">
    <property type="term" value="P:photosynthesis"/>
    <property type="evidence" value="ECO:0007669"/>
    <property type="project" value="UniProtKB-UniRule"/>
</dbReference>
<dbReference type="HAMAP" id="MF_01317">
    <property type="entry name" value="PSII_PsbL"/>
    <property type="match status" value="1"/>
</dbReference>
<dbReference type="InterPro" id="IPR003372">
    <property type="entry name" value="PSII_PsbL"/>
</dbReference>
<dbReference type="InterPro" id="IPR037266">
    <property type="entry name" value="PSII_PsbL_sf"/>
</dbReference>
<dbReference type="NCBIfam" id="NF001972">
    <property type="entry name" value="PRK00753.1"/>
    <property type="match status" value="1"/>
</dbReference>
<dbReference type="Pfam" id="PF02419">
    <property type="entry name" value="PsbL"/>
    <property type="match status" value="1"/>
</dbReference>
<dbReference type="SUPFAM" id="SSF161017">
    <property type="entry name" value="Photosystem II reaction center protein L, PsbL"/>
    <property type="match status" value="1"/>
</dbReference>
<protein>
    <recommendedName>
        <fullName evidence="1">Photosystem II reaction center protein L</fullName>
        <shortName evidence="1">PSII-L</shortName>
    </recommendedName>
</protein>
<reference key="1">
    <citation type="journal article" date="2008" name="Curr. Biol.">
        <title>Chromatophore genome sequence of Paulinella sheds light on acquisition of photosynthesis by eukaryotes.</title>
        <authorList>
            <person name="Nowack E.C.M."/>
            <person name="Melkonian M."/>
            <person name="Gloeckner G."/>
        </authorList>
    </citation>
    <scope>NUCLEOTIDE SEQUENCE [LARGE SCALE GENOMIC DNA]</scope>
</reference>
<accession>B1X4Q7</accession>
<feature type="chain" id="PRO_0000353269" description="Photosystem II reaction center protein L">
    <location>
        <begin position="1"/>
        <end position="39"/>
    </location>
</feature>
<feature type="transmembrane region" description="Helical" evidence="1">
    <location>
        <begin position="18"/>
        <end position="38"/>
    </location>
</feature>
<proteinExistence type="inferred from homology"/>
<geneLocation type="organellar chromatophore"/>
<sequence length="39" mass="4489">MQRNPNPNNLPVELNRTSLYLGLLLVFVTGVLFSSYFFN</sequence>
<name>PSBL_PAUCH</name>
<keyword id="KW-0472">Membrane</keyword>
<keyword id="KW-0994">Organellar chromatophore</keyword>
<keyword id="KW-0602">Photosynthesis</keyword>
<keyword id="KW-0604">Photosystem II</keyword>
<keyword id="KW-0934">Plastid</keyword>
<keyword id="KW-0674">Reaction center</keyword>
<keyword id="KW-0793">Thylakoid</keyword>
<keyword id="KW-0812">Transmembrane</keyword>
<keyword id="KW-1133">Transmembrane helix</keyword>
<organism>
    <name type="scientific">Paulinella chromatophora</name>
    <dbReference type="NCBI Taxonomy" id="39717"/>
    <lineage>
        <taxon>Eukaryota</taxon>
        <taxon>Sar</taxon>
        <taxon>Rhizaria</taxon>
        <taxon>Cercozoa</taxon>
        <taxon>Imbricatea</taxon>
        <taxon>Silicofilosea</taxon>
        <taxon>Euglyphida</taxon>
        <taxon>Paulinellidae</taxon>
        <taxon>Paulinella</taxon>
    </lineage>
</organism>